<sequence>MATGKIVQVIGAVVDVEFPQDAVPRVYDALEVQNGNERLVLEVQQQLGGGIVRTIAMGSSDGLRRGLDVKDLEHPIEVPVGKATLGRIMNVLGEPVDMKGEIGEEERWAIHRAAPSYEELSNSQELLETGIKVIDLMCPFAKGGKVGLFGGAGVGKTVNMMELIRNIAIEHSGYSVFAGVGERTREGNDFYHEMTDSNVIDKVSLVYGQMNEPPGNRLRVALTGLTMAEKFRDEGRDVLLFVDNIYRYTLAGTEVSALLGRMPSAVGYQPTLAEEMGVLQERITSTKTGSITSVQAVYVPADDLTDPSPATTFAHLDATVVLSRQIASLGIYPAVDPLDSTSRQLDPLVVGQEHYDTARGVQSILQRYQELKDIIAILGMDELSEEDKLVVARARKIQRFLSQPFFVAEVFTGSPGKYVSLKDTIRGFKGIMEGEYDHLPEQAFYMVGSIEEAVEKAKKL</sequence>
<evidence type="ECO:0000250" key="1"/>
<evidence type="ECO:0000255" key="2">
    <source>
        <dbReference type="HAMAP-Rule" id="MF_01347"/>
    </source>
</evidence>
<protein>
    <recommendedName>
        <fullName evidence="2">ATP synthase subunit beta</fullName>
        <ecNumber evidence="2">7.1.2.2</ecNumber>
    </recommendedName>
    <alternativeName>
        <fullName evidence="2">ATP synthase F1 sector subunit beta</fullName>
    </alternativeName>
    <alternativeName>
        <fullName evidence="2">F-ATPase subunit beta</fullName>
    </alternativeName>
</protein>
<feature type="initiator methionine" description="Removed" evidence="1">
    <location>
        <position position="1"/>
    </location>
</feature>
<feature type="chain" id="PRO_0000144467" description="ATP synthase subunit beta">
    <location>
        <begin position="2"/>
        <end position="460"/>
    </location>
</feature>
<feature type="binding site" evidence="2">
    <location>
        <begin position="150"/>
        <end position="157"/>
    </location>
    <ligand>
        <name>ATP</name>
        <dbReference type="ChEBI" id="CHEBI:30616"/>
    </ligand>
</feature>
<accession>P0ABB7</accession>
<accession>P00824</accession>
<organism>
    <name type="scientific">Shigella flexneri</name>
    <dbReference type="NCBI Taxonomy" id="623"/>
    <lineage>
        <taxon>Bacteria</taxon>
        <taxon>Pseudomonadati</taxon>
        <taxon>Pseudomonadota</taxon>
        <taxon>Gammaproteobacteria</taxon>
        <taxon>Enterobacterales</taxon>
        <taxon>Enterobacteriaceae</taxon>
        <taxon>Shigella</taxon>
    </lineage>
</organism>
<comment type="function">
    <text evidence="2">Produces ATP from ADP in the presence of a proton gradient across the membrane. The catalytic sites are hosted primarily by the beta subunits.</text>
</comment>
<comment type="catalytic activity">
    <reaction evidence="2">
        <text>ATP + H2O + 4 H(+)(in) = ADP + phosphate + 5 H(+)(out)</text>
        <dbReference type="Rhea" id="RHEA:57720"/>
        <dbReference type="ChEBI" id="CHEBI:15377"/>
        <dbReference type="ChEBI" id="CHEBI:15378"/>
        <dbReference type="ChEBI" id="CHEBI:30616"/>
        <dbReference type="ChEBI" id="CHEBI:43474"/>
        <dbReference type="ChEBI" id="CHEBI:456216"/>
        <dbReference type="EC" id="7.1.2.2"/>
    </reaction>
</comment>
<comment type="subunit">
    <text evidence="2">F-type ATPases have 2 components, CF(1) - the catalytic core - and CF(0) - the membrane proton channel. CF(1) has five subunits: alpha(3), beta(3), gamma(1), delta(1), epsilon(1). CF(0) has three main subunits: a(1), b(2) and c(9-12). The alpha and beta chains form an alternating ring which encloses part of the gamma chain. CF(1) is attached to CF(0) by a central stalk formed by the gamma and epsilon chains, while a peripheral stalk is formed by the delta and b chains.</text>
</comment>
<comment type="subcellular location">
    <subcellularLocation>
        <location evidence="2">Cell inner membrane</location>
        <topology evidence="2">Peripheral membrane protein</topology>
    </subcellularLocation>
</comment>
<comment type="similarity">
    <text evidence="2">Belongs to the ATPase alpha/beta chains family.</text>
</comment>
<dbReference type="EC" id="7.1.2.2" evidence="2"/>
<dbReference type="EMBL" id="AE005674">
    <property type="protein sequence ID" value="AAN45252.1"/>
    <property type="molecule type" value="Genomic_DNA"/>
</dbReference>
<dbReference type="EMBL" id="AE014073">
    <property type="protein sequence ID" value="AAP18945.1"/>
    <property type="molecule type" value="Genomic_DNA"/>
</dbReference>
<dbReference type="RefSeq" id="NP_709545.1">
    <property type="nucleotide sequence ID" value="NC_004337.2"/>
</dbReference>
<dbReference type="RefSeq" id="WP_000190506.1">
    <property type="nucleotide sequence ID" value="NZ_WPGW01000050.1"/>
</dbReference>
<dbReference type="SMR" id="P0ABB7"/>
<dbReference type="STRING" id="198214.SF3812"/>
<dbReference type="PaxDb" id="198214-SF3812"/>
<dbReference type="GeneID" id="1026060"/>
<dbReference type="GeneID" id="93778235"/>
<dbReference type="KEGG" id="sfl:SF3812"/>
<dbReference type="KEGG" id="sfx:S3956"/>
<dbReference type="PATRIC" id="fig|198214.7.peg.4499"/>
<dbReference type="HOGENOM" id="CLU_022398_0_2_6"/>
<dbReference type="Proteomes" id="UP000001006">
    <property type="component" value="Chromosome"/>
</dbReference>
<dbReference type="Proteomes" id="UP000002673">
    <property type="component" value="Chromosome"/>
</dbReference>
<dbReference type="GO" id="GO:0005886">
    <property type="term" value="C:plasma membrane"/>
    <property type="evidence" value="ECO:0007669"/>
    <property type="project" value="UniProtKB-SubCell"/>
</dbReference>
<dbReference type="GO" id="GO:0045259">
    <property type="term" value="C:proton-transporting ATP synthase complex"/>
    <property type="evidence" value="ECO:0007669"/>
    <property type="project" value="UniProtKB-KW"/>
</dbReference>
<dbReference type="GO" id="GO:0005524">
    <property type="term" value="F:ATP binding"/>
    <property type="evidence" value="ECO:0007669"/>
    <property type="project" value="UniProtKB-UniRule"/>
</dbReference>
<dbReference type="GO" id="GO:0016887">
    <property type="term" value="F:ATP hydrolysis activity"/>
    <property type="evidence" value="ECO:0007669"/>
    <property type="project" value="InterPro"/>
</dbReference>
<dbReference type="GO" id="GO:0046933">
    <property type="term" value="F:proton-transporting ATP synthase activity, rotational mechanism"/>
    <property type="evidence" value="ECO:0007669"/>
    <property type="project" value="UniProtKB-UniRule"/>
</dbReference>
<dbReference type="CDD" id="cd18110">
    <property type="entry name" value="ATP-synt_F1_beta_C"/>
    <property type="match status" value="1"/>
</dbReference>
<dbReference type="CDD" id="cd18115">
    <property type="entry name" value="ATP-synt_F1_beta_N"/>
    <property type="match status" value="1"/>
</dbReference>
<dbReference type="CDD" id="cd01133">
    <property type="entry name" value="F1-ATPase_beta_CD"/>
    <property type="match status" value="1"/>
</dbReference>
<dbReference type="FunFam" id="1.10.1140.10:FF:000001">
    <property type="entry name" value="ATP synthase subunit beta"/>
    <property type="match status" value="1"/>
</dbReference>
<dbReference type="FunFam" id="2.40.10.170:FF:000003">
    <property type="entry name" value="ATP synthase subunit beta"/>
    <property type="match status" value="1"/>
</dbReference>
<dbReference type="FunFam" id="3.40.50.300:FF:000004">
    <property type="entry name" value="ATP synthase subunit beta"/>
    <property type="match status" value="1"/>
</dbReference>
<dbReference type="Gene3D" id="2.40.10.170">
    <property type="match status" value="1"/>
</dbReference>
<dbReference type="Gene3D" id="1.10.1140.10">
    <property type="entry name" value="Bovine Mitochondrial F1-atpase, Atp Synthase Beta Chain, Chain D, domain 3"/>
    <property type="match status" value="1"/>
</dbReference>
<dbReference type="Gene3D" id="3.40.50.300">
    <property type="entry name" value="P-loop containing nucleotide triphosphate hydrolases"/>
    <property type="match status" value="1"/>
</dbReference>
<dbReference type="HAMAP" id="MF_01347">
    <property type="entry name" value="ATP_synth_beta_bact"/>
    <property type="match status" value="1"/>
</dbReference>
<dbReference type="InterPro" id="IPR003593">
    <property type="entry name" value="AAA+_ATPase"/>
</dbReference>
<dbReference type="InterPro" id="IPR055190">
    <property type="entry name" value="ATP-synt_VA_C"/>
</dbReference>
<dbReference type="InterPro" id="IPR005722">
    <property type="entry name" value="ATP_synth_F1_bsu"/>
</dbReference>
<dbReference type="InterPro" id="IPR020003">
    <property type="entry name" value="ATPase_a/bsu_AS"/>
</dbReference>
<dbReference type="InterPro" id="IPR050053">
    <property type="entry name" value="ATPase_alpha/beta_chains"/>
</dbReference>
<dbReference type="InterPro" id="IPR004100">
    <property type="entry name" value="ATPase_F1/V1/A1_a/bsu_N"/>
</dbReference>
<dbReference type="InterPro" id="IPR036121">
    <property type="entry name" value="ATPase_F1/V1/A1_a/bsu_N_sf"/>
</dbReference>
<dbReference type="InterPro" id="IPR000194">
    <property type="entry name" value="ATPase_F1/V1/A1_a/bsu_nucl-bd"/>
</dbReference>
<dbReference type="InterPro" id="IPR024034">
    <property type="entry name" value="ATPase_F1/V1_b/a_C"/>
</dbReference>
<dbReference type="InterPro" id="IPR027417">
    <property type="entry name" value="P-loop_NTPase"/>
</dbReference>
<dbReference type="NCBIfam" id="TIGR01039">
    <property type="entry name" value="atpD"/>
    <property type="match status" value="1"/>
</dbReference>
<dbReference type="PANTHER" id="PTHR15184">
    <property type="entry name" value="ATP SYNTHASE"/>
    <property type="match status" value="1"/>
</dbReference>
<dbReference type="PANTHER" id="PTHR15184:SF71">
    <property type="entry name" value="ATP SYNTHASE SUBUNIT BETA, MITOCHONDRIAL"/>
    <property type="match status" value="1"/>
</dbReference>
<dbReference type="Pfam" id="PF00006">
    <property type="entry name" value="ATP-synt_ab"/>
    <property type="match status" value="1"/>
</dbReference>
<dbReference type="Pfam" id="PF02874">
    <property type="entry name" value="ATP-synt_ab_N"/>
    <property type="match status" value="1"/>
</dbReference>
<dbReference type="Pfam" id="PF22919">
    <property type="entry name" value="ATP-synt_VA_C"/>
    <property type="match status" value="1"/>
</dbReference>
<dbReference type="SMART" id="SM00382">
    <property type="entry name" value="AAA"/>
    <property type="match status" value="1"/>
</dbReference>
<dbReference type="SUPFAM" id="SSF47917">
    <property type="entry name" value="C-terminal domain of alpha and beta subunits of F1 ATP synthase"/>
    <property type="match status" value="1"/>
</dbReference>
<dbReference type="SUPFAM" id="SSF50615">
    <property type="entry name" value="N-terminal domain of alpha and beta subunits of F1 ATP synthase"/>
    <property type="match status" value="1"/>
</dbReference>
<dbReference type="SUPFAM" id="SSF52540">
    <property type="entry name" value="P-loop containing nucleoside triphosphate hydrolases"/>
    <property type="match status" value="1"/>
</dbReference>
<dbReference type="PROSITE" id="PS00152">
    <property type="entry name" value="ATPASE_ALPHA_BETA"/>
    <property type="match status" value="1"/>
</dbReference>
<gene>
    <name evidence="2" type="primary">atpD</name>
    <name type="ordered locus">SF3812</name>
    <name type="ordered locus">S3956</name>
</gene>
<proteinExistence type="inferred from homology"/>
<reference key="1">
    <citation type="journal article" date="2002" name="Nucleic Acids Res.">
        <title>Genome sequence of Shigella flexneri 2a: insights into pathogenicity through comparison with genomes of Escherichia coli K12 and O157.</title>
        <authorList>
            <person name="Jin Q."/>
            <person name="Yuan Z."/>
            <person name="Xu J."/>
            <person name="Wang Y."/>
            <person name="Shen Y."/>
            <person name="Lu W."/>
            <person name="Wang J."/>
            <person name="Liu H."/>
            <person name="Yang J."/>
            <person name="Yang F."/>
            <person name="Zhang X."/>
            <person name="Zhang J."/>
            <person name="Yang G."/>
            <person name="Wu H."/>
            <person name="Qu D."/>
            <person name="Dong J."/>
            <person name="Sun L."/>
            <person name="Xue Y."/>
            <person name="Zhao A."/>
            <person name="Gao Y."/>
            <person name="Zhu J."/>
            <person name="Kan B."/>
            <person name="Ding K."/>
            <person name="Chen S."/>
            <person name="Cheng H."/>
            <person name="Yao Z."/>
            <person name="He B."/>
            <person name="Chen R."/>
            <person name="Ma D."/>
            <person name="Qiang B."/>
            <person name="Wen Y."/>
            <person name="Hou Y."/>
            <person name="Yu J."/>
        </authorList>
    </citation>
    <scope>NUCLEOTIDE SEQUENCE [LARGE SCALE GENOMIC DNA]</scope>
    <source>
        <strain>301 / Serotype 2a</strain>
    </source>
</reference>
<reference key="2">
    <citation type="journal article" date="2003" name="Infect. Immun.">
        <title>Complete genome sequence and comparative genomics of Shigella flexneri serotype 2a strain 2457T.</title>
        <authorList>
            <person name="Wei J."/>
            <person name="Goldberg M.B."/>
            <person name="Burland V."/>
            <person name="Venkatesan M.M."/>
            <person name="Deng W."/>
            <person name="Fournier G."/>
            <person name="Mayhew G.F."/>
            <person name="Plunkett G. III"/>
            <person name="Rose D.J."/>
            <person name="Darling A."/>
            <person name="Mau B."/>
            <person name="Perna N.T."/>
            <person name="Payne S.M."/>
            <person name="Runyen-Janecky L.J."/>
            <person name="Zhou S."/>
            <person name="Schwartz D.C."/>
            <person name="Blattner F.R."/>
        </authorList>
    </citation>
    <scope>NUCLEOTIDE SEQUENCE [LARGE SCALE GENOMIC DNA]</scope>
    <source>
        <strain>ATCC 700930 / 2457T / Serotype 2a</strain>
    </source>
</reference>
<name>ATPB_SHIFL</name>
<keyword id="KW-0066">ATP synthesis</keyword>
<keyword id="KW-0067">ATP-binding</keyword>
<keyword id="KW-0997">Cell inner membrane</keyword>
<keyword id="KW-1003">Cell membrane</keyword>
<keyword id="KW-0139">CF(1)</keyword>
<keyword id="KW-0375">Hydrogen ion transport</keyword>
<keyword id="KW-0406">Ion transport</keyword>
<keyword id="KW-0472">Membrane</keyword>
<keyword id="KW-0547">Nucleotide-binding</keyword>
<keyword id="KW-1185">Reference proteome</keyword>
<keyword id="KW-1278">Translocase</keyword>
<keyword id="KW-0813">Transport</keyword>